<gene>
    <name type="primary">copS</name>
</gene>
<evidence type="ECO:0000255" key="1"/>
<evidence type="ECO:0000255" key="2">
    <source>
        <dbReference type="PROSITE-ProRule" id="PRU00102"/>
    </source>
</evidence>
<evidence type="ECO:0000255" key="3">
    <source>
        <dbReference type="PROSITE-ProRule" id="PRU00107"/>
    </source>
</evidence>
<evidence type="ECO:0000305" key="4"/>
<name>COPS_PSEUB</name>
<organism>
    <name type="scientific">Pseudomonas syringae pv. tomato</name>
    <dbReference type="NCBI Taxonomy" id="323"/>
    <lineage>
        <taxon>Bacteria</taxon>
        <taxon>Pseudomonadati</taxon>
        <taxon>Pseudomonadota</taxon>
        <taxon>Gammaproteobacteria</taxon>
        <taxon>Pseudomonadales</taxon>
        <taxon>Pseudomonadaceae</taxon>
        <taxon>Pseudomonas</taxon>
    </lineage>
</organism>
<comment type="function">
    <text>Member of the two-component regulatory system CopS/CopR. Involved in the activation of copper resistance gene operon copABCD. Specifically recognizes or transduces a signal only in response to copper. This would lead to phosphorylation of CopR in the cytoplasm. CopS/CopR may also regulate chromosomally encoded genes. May also be involved in basic copper metabolism.</text>
</comment>
<comment type="catalytic activity">
    <reaction>
        <text>ATP + protein L-histidine = ADP + protein N-phospho-L-histidine.</text>
        <dbReference type="EC" id="2.7.13.3"/>
    </reaction>
</comment>
<comment type="subcellular location">
    <subcellularLocation>
        <location evidence="4">Cell inner membrane</location>
        <topology evidence="4">Multi-pass membrane protein</topology>
    </subcellularLocation>
</comment>
<accession>Q02541</accession>
<dbReference type="EC" id="2.7.13.3"/>
<dbReference type="EMBL" id="L05176">
    <property type="protein sequence ID" value="AAA25804.1"/>
    <property type="molecule type" value="Genomic_DNA"/>
</dbReference>
<dbReference type="PIR" id="C47080">
    <property type="entry name" value="C47080"/>
</dbReference>
<dbReference type="SMR" id="Q02541"/>
<dbReference type="BRENDA" id="2.7.13.3">
    <property type="organism ID" value="5193"/>
</dbReference>
<dbReference type="GO" id="GO:0005886">
    <property type="term" value="C:plasma membrane"/>
    <property type="evidence" value="ECO:0007669"/>
    <property type="project" value="UniProtKB-SubCell"/>
</dbReference>
<dbReference type="GO" id="GO:0005524">
    <property type="term" value="F:ATP binding"/>
    <property type="evidence" value="ECO:0007669"/>
    <property type="project" value="UniProtKB-KW"/>
</dbReference>
<dbReference type="GO" id="GO:0000155">
    <property type="term" value="F:phosphorelay sensor kinase activity"/>
    <property type="evidence" value="ECO:0007669"/>
    <property type="project" value="InterPro"/>
</dbReference>
<dbReference type="CDD" id="cd06225">
    <property type="entry name" value="HAMP"/>
    <property type="match status" value="1"/>
</dbReference>
<dbReference type="CDD" id="cd00082">
    <property type="entry name" value="HisKA"/>
    <property type="match status" value="1"/>
</dbReference>
<dbReference type="FunFam" id="1.10.287.130:FF:000001">
    <property type="entry name" value="Two-component sensor histidine kinase"/>
    <property type="match status" value="1"/>
</dbReference>
<dbReference type="Gene3D" id="1.10.287.130">
    <property type="match status" value="1"/>
</dbReference>
<dbReference type="Gene3D" id="6.10.340.10">
    <property type="match status" value="1"/>
</dbReference>
<dbReference type="Gene3D" id="3.30.565.10">
    <property type="entry name" value="Histidine kinase-like ATPase, C-terminal domain"/>
    <property type="match status" value="1"/>
</dbReference>
<dbReference type="InterPro" id="IPR048590">
    <property type="entry name" value="CusS-like_sensor"/>
</dbReference>
<dbReference type="InterPro" id="IPR006290">
    <property type="entry name" value="CztS_silS_copS"/>
</dbReference>
<dbReference type="InterPro" id="IPR003660">
    <property type="entry name" value="HAMP_dom"/>
</dbReference>
<dbReference type="InterPro" id="IPR036890">
    <property type="entry name" value="HATPase_C_sf"/>
</dbReference>
<dbReference type="InterPro" id="IPR005467">
    <property type="entry name" value="His_kinase_dom"/>
</dbReference>
<dbReference type="InterPro" id="IPR003661">
    <property type="entry name" value="HisK_dim/P_dom"/>
</dbReference>
<dbReference type="InterPro" id="IPR036097">
    <property type="entry name" value="HisK_dim/P_sf"/>
</dbReference>
<dbReference type="InterPro" id="IPR050428">
    <property type="entry name" value="TCS_sensor_his_kinase"/>
</dbReference>
<dbReference type="NCBIfam" id="TIGR01386">
    <property type="entry name" value="cztS_silS_copS"/>
    <property type="match status" value="1"/>
</dbReference>
<dbReference type="PANTHER" id="PTHR45436:SF15">
    <property type="entry name" value="SENSOR HISTIDINE KINASE CUSS"/>
    <property type="match status" value="1"/>
</dbReference>
<dbReference type="PANTHER" id="PTHR45436">
    <property type="entry name" value="SENSOR HISTIDINE KINASE YKOH"/>
    <property type="match status" value="1"/>
</dbReference>
<dbReference type="Pfam" id="PF21085">
    <property type="entry name" value="CusS"/>
    <property type="match status" value="1"/>
</dbReference>
<dbReference type="Pfam" id="PF00672">
    <property type="entry name" value="HAMP"/>
    <property type="match status" value="1"/>
</dbReference>
<dbReference type="Pfam" id="PF02518">
    <property type="entry name" value="HATPase_c"/>
    <property type="match status" value="1"/>
</dbReference>
<dbReference type="Pfam" id="PF00512">
    <property type="entry name" value="HisKA"/>
    <property type="match status" value="1"/>
</dbReference>
<dbReference type="SMART" id="SM00304">
    <property type="entry name" value="HAMP"/>
    <property type="match status" value="1"/>
</dbReference>
<dbReference type="SMART" id="SM00387">
    <property type="entry name" value="HATPase_c"/>
    <property type="match status" value="1"/>
</dbReference>
<dbReference type="SMART" id="SM00388">
    <property type="entry name" value="HisKA"/>
    <property type="match status" value="1"/>
</dbReference>
<dbReference type="SUPFAM" id="SSF55874">
    <property type="entry name" value="ATPase domain of HSP90 chaperone/DNA topoisomerase II/histidine kinase"/>
    <property type="match status" value="1"/>
</dbReference>
<dbReference type="SUPFAM" id="SSF158472">
    <property type="entry name" value="HAMP domain-like"/>
    <property type="match status" value="1"/>
</dbReference>
<dbReference type="SUPFAM" id="SSF47384">
    <property type="entry name" value="Homodimeric domain of signal transducing histidine kinase"/>
    <property type="match status" value="1"/>
</dbReference>
<dbReference type="PROSITE" id="PS50885">
    <property type="entry name" value="HAMP"/>
    <property type="match status" value="1"/>
</dbReference>
<dbReference type="PROSITE" id="PS50109">
    <property type="entry name" value="HIS_KIN"/>
    <property type="match status" value="1"/>
</dbReference>
<protein>
    <recommendedName>
        <fullName>Sensor protein CopS</fullName>
        <ecNumber>2.7.13.3</ecNumber>
    </recommendedName>
</protein>
<feature type="chain" id="PRO_0000074737" description="Sensor protein CopS">
    <location>
        <begin position="1"/>
        <end position="487"/>
    </location>
</feature>
<feature type="topological domain" description="Periplasmic" evidence="1">
    <location>
        <begin position="1"/>
        <end position="9"/>
    </location>
</feature>
<feature type="transmembrane region" description="Helical" evidence="1">
    <location>
        <begin position="10"/>
        <end position="30"/>
    </location>
</feature>
<feature type="topological domain" description="Cytoplasmic" evidence="1">
    <location>
        <begin position="31"/>
        <end position="136"/>
    </location>
</feature>
<feature type="transmembrane region" description="Helical" evidence="1">
    <location>
        <begin position="137"/>
        <end position="157"/>
    </location>
</feature>
<feature type="topological domain" description="Periplasmic" evidence="1">
    <location>
        <begin position="158"/>
        <end position="159"/>
    </location>
</feature>
<feature type="transmembrane region" description="Helical" evidence="1">
    <location>
        <begin position="160"/>
        <end position="180"/>
    </location>
</feature>
<feature type="topological domain" description="Cytoplasmic" evidence="1">
    <location>
        <begin position="181"/>
        <end position="487"/>
    </location>
</feature>
<feature type="domain" description="HAMP" evidence="2">
    <location>
        <begin position="181"/>
        <end position="234"/>
    </location>
</feature>
<feature type="domain" description="Histidine kinase" evidence="3">
    <location>
        <begin position="242"/>
        <end position="455"/>
    </location>
</feature>
<feature type="modified residue" description="Phosphohistidine; by autocatalysis" evidence="3">
    <location>
        <position position="245"/>
    </location>
</feature>
<reference key="1">
    <citation type="journal article" date="1993" name="J. Bacteriol.">
        <title>A two-component regulatory system required for copper-inducible expression of the copper resistance operon of Pseudomonas syringae.</title>
        <authorList>
            <person name="Mills S.D."/>
            <person name="Jasalavich C.A."/>
            <person name="Cooksey D.A."/>
        </authorList>
    </citation>
    <scope>NUCLEOTIDE SEQUENCE [GENOMIC DNA]</scope>
</reference>
<keyword id="KW-0067">ATP-binding</keyword>
<keyword id="KW-0997">Cell inner membrane</keyword>
<keyword id="KW-1003">Cell membrane</keyword>
<keyword id="KW-0186">Copper</keyword>
<keyword id="KW-0418">Kinase</keyword>
<keyword id="KW-0472">Membrane</keyword>
<keyword id="KW-0547">Nucleotide-binding</keyword>
<keyword id="KW-0597">Phosphoprotein</keyword>
<keyword id="KW-0614">Plasmid</keyword>
<keyword id="KW-0808">Transferase</keyword>
<keyword id="KW-0812">Transmembrane</keyword>
<keyword id="KW-1133">Transmembrane helix</keyword>
<keyword id="KW-0902">Two-component regulatory system</keyword>
<geneLocation type="plasmid">
    <name>pPT23D</name>
</geneLocation>
<sequence>MKPGSLTLRLSLLFVVAVAAVLIIVGVAFNELSRHHFRALDAQALGEKLEAITQIAKESGANPELLKARWHTLLGAHPDLSAVFLKTDGTPFFAEPPQSAVPSLAQATQRDGVWEWEKEGRMFRALTASVSLPTASPPLTAWLVLDVTTHMHFFAMLERWFWGVLLASTVLSAALGWLVAKNGLRPVARVTQTAASMSAGSLKERIPLEPVPDELRALITAFNSMLGRLDDSFMRLSNFSADIAHELRTPISNLRTHTEVILAKKRAPEVYEENLSSNLEELNRLSGIIDGMLFLAKSDNGLIVPEAVELDLRTVISKLFGYYEFLAEDKGIQLQASGNASIFADSVMIDRVVSNLLSNALRYTSSGETIKVSIHDHGGRVELRLENPGPEIVPQHLDRIFDRFYRVDPARREGRECGAGASDCPVLDASAWRHYLVYIPRGPNDLHPHLHAIACPTNLTCRPDSLGTAKPGHTRLGEHETGCHCAG</sequence>
<proteinExistence type="inferred from homology"/>